<protein>
    <recommendedName>
        <fullName evidence="1">Small ribosomal subunit protein bS21</fullName>
    </recommendedName>
    <alternativeName>
        <fullName evidence="2">30S ribosomal protein S21</fullName>
    </alternativeName>
</protein>
<dbReference type="EMBL" id="CP000153">
    <property type="protein sequence ID" value="ABB43303.1"/>
    <property type="molecule type" value="Genomic_DNA"/>
</dbReference>
<dbReference type="SMR" id="Q30UM8"/>
<dbReference type="STRING" id="326298.Suden_0022"/>
<dbReference type="KEGG" id="tdn:Suden_0022"/>
<dbReference type="eggNOG" id="COG0828">
    <property type="taxonomic scope" value="Bacteria"/>
</dbReference>
<dbReference type="HOGENOM" id="CLU_159258_1_1_7"/>
<dbReference type="OrthoDB" id="9799244at2"/>
<dbReference type="Proteomes" id="UP000002714">
    <property type="component" value="Chromosome"/>
</dbReference>
<dbReference type="GO" id="GO:1990904">
    <property type="term" value="C:ribonucleoprotein complex"/>
    <property type="evidence" value="ECO:0007669"/>
    <property type="project" value="UniProtKB-KW"/>
</dbReference>
<dbReference type="GO" id="GO:0005840">
    <property type="term" value="C:ribosome"/>
    <property type="evidence" value="ECO:0007669"/>
    <property type="project" value="UniProtKB-KW"/>
</dbReference>
<dbReference type="GO" id="GO:0003735">
    <property type="term" value="F:structural constituent of ribosome"/>
    <property type="evidence" value="ECO:0007669"/>
    <property type="project" value="InterPro"/>
</dbReference>
<dbReference type="GO" id="GO:0006412">
    <property type="term" value="P:translation"/>
    <property type="evidence" value="ECO:0007669"/>
    <property type="project" value="UniProtKB-UniRule"/>
</dbReference>
<dbReference type="Gene3D" id="1.20.5.1150">
    <property type="entry name" value="Ribosomal protein S8"/>
    <property type="match status" value="1"/>
</dbReference>
<dbReference type="HAMAP" id="MF_00358">
    <property type="entry name" value="Ribosomal_bS21"/>
    <property type="match status" value="1"/>
</dbReference>
<dbReference type="InterPro" id="IPR001911">
    <property type="entry name" value="Ribosomal_bS21"/>
</dbReference>
<dbReference type="InterPro" id="IPR038380">
    <property type="entry name" value="Ribosomal_bS21_sf"/>
</dbReference>
<dbReference type="NCBIfam" id="TIGR00030">
    <property type="entry name" value="S21p"/>
    <property type="match status" value="1"/>
</dbReference>
<dbReference type="Pfam" id="PF01165">
    <property type="entry name" value="Ribosomal_S21"/>
    <property type="match status" value="1"/>
</dbReference>
<dbReference type="PRINTS" id="PR00976">
    <property type="entry name" value="RIBOSOMALS21"/>
</dbReference>
<evidence type="ECO:0000255" key="1">
    <source>
        <dbReference type="HAMAP-Rule" id="MF_00358"/>
    </source>
</evidence>
<evidence type="ECO:0000305" key="2"/>
<feature type="chain" id="PRO_0000266794" description="Small ribosomal subunit protein bS21">
    <location>
        <begin position="1"/>
        <end position="70"/>
    </location>
</feature>
<keyword id="KW-1185">Reference proteome</keyword>
<keyword id="KW-0687">Ribonucleoprotein</keyword>
<keyword id="KW-0689">Ribosomal protein</keyword>
<sequence>MPGIVLRSDDNFDASYRRFKKQTDRNLIVTEARARRFHETKTEKRKKFLIASRKKMLKRLYMMRRYESRL</sequence>
<reference key="1">
    <citation type="journal article" date="2008" name="Appl. Environ. Microbiol.">
        <title>Genome of the epsilonproteobacterial chemolithoautotroph Sulfurimonas denitrificans.</title>
        <authorList>
            <person name="Sievert S.M."/>
            <person name="Scott K.M."/>
            <person name="Klotz M.G."/>
            <person name="Chain P.S.G."/>
            <person name="Hauser L.J."/>
            <person name="Hemp J."/>
            <person name="Huegler M."/>
            <person name="Land M."/>
            <person name="Lapidus A."/>
            <person name="Larimer F.W."/>
            <person name="Lucas S."/>
            <person name="Malfatti S.A."/>
            <person name="Meyer F."/>
            <person name="Paulsen I.T."/>
            <person name="Ren Q."/>
            <person name="Simon J."/>
            <person name="Bailey K."/>
            <person name="Diaz E."/>
            <person name="Fitzpatrick K.A."/>
            <person name="Glover B."/>
            <person name="Gwatney N."/>
            <person name="Korajkic A."/>
            <person name="Long A."/>
            <person name="Mobberley J.M."/>
            <person name="Pantry S.N."/>
            <person name="Pazder G."/>
            <person name="Peterson S."/>
            <person name="Quintanilla J.D."/>
            <person name="Sprinkle R."/>
            <person name="Stephens J."/>
            <person name="Thomas P."/>
            <person name="Vaughn R."/>
            <person name="Weber M.J."/>
            <person name="Wooten L.L."/>
        </authorList>
    </citation>
    <scope>NUCLEOTIDE SEQUENCE [LARGE SCALE GENOMIC DNA]</scope>
    <source>
        <strain>ATCC 33889 / DSM 1251</strain>
    </source>
</reference>
<comment type="similarity">
    <text evidence="1">Belongs to the bacterial ribosomal protein bS21 family.</text>
</comment>
<proteinExistence type="inferred from homology"/>
<accession>Q30UM8</accession>
<gene>
    <name evidence="1" type="primary">rpsU</name>
    <name type="ordered locus">Suden_0022</name>
</gene>
<organism>
    <name type="scientific">Sulfurimonas denitrificans (strain ATCC 33889 / DSM 1251)</name>
    <name type="common">Thiomicrospira denitrificans (strain ATCC 33889 / DSM 1251)</name>
    <dbReference type="NCBI Taxonomy" id="326298"/>
    <lineage>
        <taxon>Bacteria</taxon>
        <taxon>Pseudomonadati</taxon>
        <taxon>Campylobacterota</taxon>
        <taxon>Epsilonproteobacteria</taxon>
        <taxon>Campylobacterales</taxon>
        <taxon>Sulfurimonadaceae</taxon>
        <taxon>Sulfurimonas</taxon>
    </lineage>
</organism>
<name>RS21_SULDN</name>